<dbReference type="EMBL" id="AP000386">
    <property type="protein sequence ID" value="BAB02132.1"/>
    <property type="molecule type" value="Genomic_DNA"/>
</dbReference>
<dbReference type="EMBL" id="CP002686">
    <property type="protein sequence ID" value="AEE77501.1"/>
    <property type="molecule type" value="Genomic_DNA"/>
</dbReference>
<dbReference type="EMBL" id="CP002686">
    <property type="protein sequence ID" value="AEE77502.1"/>
    <property type="molecule type" value="Genomic_DNA"/>
</dbReference>
<dbReference type="EMBL" id="BX822238">
    <property type="status" value="NOT_ANNOTATED_CDS"/>
    <property type="molecule type" value="mRNA"/>
</dbReference>
<dbReference type="RefSeq" id="NP_001154652.1">
    <property type="nucleotide sequence ID" value="NM_001161180.2"/>
</dbReference>
<dbReference type="RefSeq" id="NP_189531.1">
    <property type="nucleotide sequence ID" value="NM_113810.2"/>
</dbReference>
<dbReference type="SMR" id="Q9LJW7"/>
<dbReference type="FunCoup" id="Q9LJW7">
    <property type="interactions" value="1"/>
</dbReference>
<dbReference type="STRING" id="3702.Q9LJW7"/>
<dbReference type="GlyCosmos" id="Q9LJW7">
    <property type="glycosylation" value="19 sites, No reported glycans"/>
</dbReference>
<dbReference type="GlyGen" id="Q9LJW7">
    <property type="glycosylation" value="19 sites"/>
</dbReference>
<dbReference type="PaxDb" id="3702-AT3G28890.2"/>
<dbReference type="ProteomicsDB" id="227979"/>
<dbReference type="EnsemblPlants" id="AT3G28890.1">
    <property type="protein sequence ID" value="AT3G28890.1"/>
    <property type="gene ID" value="AT3G28890"/>
</dbReference>
<dbReference type="EnsemblPlants" id="AT3G28890.2">
    <property type="protein sequence ID" value="AT3G28890.2"/>
    <property type="gene ID" value="AT3G28890"/>
</dbReference>
<dbReference type="GeneID" id="822523"/>
<dbReference type="Gramene" id="AT3G28890.1">
    <property type="protein sequence ID" value="AT3G28890.1"/>
    <property type="gene ID" value="AT3G28890"/>
</dbReference>
<dbReference type="Gramene" id="AT3G28890.2">
    <property type="protein sequence ID" value="AT3G28890.2"/>
    <property type="gene ID" value="AT3G28890"/>
</dbReference>
<dbReference type="KEGG" id="ath:AT3G28890"/>
<dbReference type="Araport" id="AT3G28890"/>
<dbReference type="TAIR" id="AT3G28890">
    <property type="gene designation" value="RLP43"/>
</dbReference>
<dbReference type="eggNOG" id="KOG0619">
    <property type="taxonomic scope" value="Eukaryota"/>
</dbReference>
<dbReference type="HOGENOM" id="CLU_000288_18_3_1"/>
<dbReference type="InParanoid" id="Q9LJW7"/>
<dbReference type="OMA" id="RSNANYM"/>
<dbReference type="PhylomeDB" id="Q9LJW7"/>
<dbReference type="PRO" id="PR:Q9LJW7"/>
<dbReference type="Proteomes" id="UP000006548">
    <property type="component" value="Chromosome 3"/>
</dbReference>
<dbReference type="ExpressionAtlas" id="Q9LJW7">
    <property type="expression patterns" value="baseline and differential"/>
</dbReference>
<dbReference type="GO" id="GO:0005886">
    <property type="term" value="C:plasma membrane"/>
    <property type="evidence" value="ECO:0007669"/>
    <property type="project" value="UniProtKB-SubCell"/>
</dbReference>
<dbReference type="FunFam" id="3.80.10.10:FF:000275">
    <property type="entry name" value="Leucine-rich repeat receptor-like protein kinase"/>
    <property type="match status" value="1"/>
</dbReference>
<dbReference type="FunFam" id="3.80.10.10:FF:000041">
    <property type="entry name" value="LRR receptor-like serine/threonine-protein kinase ERECTA"/>
    <property type="match status" value="1"/>
</dbReference>
<dbReference type="FunFam" id="3.80.10.10:FF:000213">
    <property type="entry name" value="Tyrosine-sulfated glycopeptide receptor 1"/>
    <property type="match status" value="1"/>
</dbReference>
<dbReference type="Gene3D" id="3.80.10.10">
    <property type="entry name" value="Ribonuclease Inhibitor"/>
    <property type="match status" value="4"/>
</dbReference>
<dbReference type="InterPro" id="IPR053211">
    <property type="entry name" value="DNA_repair-toleration"/>
</dbReference>
<dbReference type="InterPro" id="IPR001611">
    <property type="entry name" value="Leu-rich_rpt"/>
</dbReference>
<dbReference type="InterPro" id="IPR003591">
    <property type="entry name" value="Leu-rich_rpt_typical-subtyp"/>
</dbReference>
<dbReference type="InterPro" id="IPR032675">
    <property type="entry name" value="LRR_dom_sf"/>
</dbReference>
<dbReference type="InterPro" id="IPR013210">
    <property type="entry name" value="LRR_N_plant-typ"/>
</dbReference>
<dbReference type="InterPro" id="IPR055414">
    <property type="entry name" value="LRR_R13L4/SHOC2-like"/>
</dbReference>
<dbReference type="PANTHER" id="PTHR48060">
    <property type="entry name" value="DNA DAMAGE-REPAIR/TOLERATION PROTEIN DRT100"/>
    <property type="match status" value="1"/>
</dbReference>
<dbReference type="PANTHER" id="PTHR48060:SF24">
    <property type="entry name" value="NON-SPECIFIC SERINE_THREONINE PROTEIN KINASE"/>
    <property type="match status" value="1"/>
</dbReference>
<dbReference type="Pfam" id="PF00560">
    <property type="entry name" value="LRR_1"/>
    <property type="match status" value="6"/>
</dbReference>
<dbReference type="Pfam" id="PF23598">
    <property type="entry name" value="LRR_14"/>
    <property type="match status" value="1"/>
</dbReference>
<dbReference type="Pfam" id="PF13855">
    <property type="entry name" value="LRR_8"/>
    <property type="match status" value="2"/>
</dbReference>
<dbReference type="Pfam" id="PF08263">
    <property type="entry name" value="LRRNT_2"/>
    <property type="match status" value="1"/>
</dbReference>
<dbReference type="PRINTS" id="PR00019">
    <property type="entry name" value="LEURICHRPT"/>
</dbReference>
<dbReference type="SMART" id="SM00365">
    <property type="entry name" value="LRR_SD22"/>
    <property type="match status" value="6"/>
</dbReference>
<dbReference type="SMART" id="SM00369">
    <property type="entry name" value="LRR_TYP"/>
    <property type="match status" value="7"/>
</dbReference>
<dbReference type="SUPFAM" id="SSF52058">
    <property type="entry name" value="L domain-like"/>
    <property type="match status" value="2"/>
</dbReference>
<proteinExistence type="evidence at transcript level"/>
<feature type="signal peptide" evidence="1">
    <location>
        <begin position="1"/>
        <end position="30"/>
    </location>
</feature>
<feature type="chain" id="PRO_5014108160" description="Receptor-like protein 43">
    <location>
        <begin position="31"/>
        <end position="711"/>
    </location>
</feature>
<feature type="topological domain" description="Extracellular" evidence="1">
    <location>
        <begin position="31"/>
        <end position="666"/>
    </location>
</feature>
<feature type="transmembrane region" description="Helical" evidence="1">
    <location>
        <begin position="667"/>
        <end position="687"/>
    </location>
</feature>
<feature type="topological domain" description="Cytoplasmic" evidence="1">
    <location>
        <begin position="688"/>
        <end position="711"/>
    </location>
</feature>
<feature type="repeat" description="LRR 1" evidence="1">
    <location>
        <begin position="120"/>
        <end position="143"/>
    </location>
</feature>
<feature type="repeat" description="LRR 2" evidence="1">
    <location>
        <begin position="144"/>
        <end position="168"/>
    </location>
</feature>
<feature type="repeat" description="LRR 3" evidence="1">
    <location>
        <begin position="170"/>
        <end position="192"/>
    </location>
</feature>
<feature type="repeat" description="LRR 4" evidence="1">
    <location>
        <begin position="193"/>
        <end position="216"/>
    </location>
</feature>
<feature type="repeat" description="LRR 5" evidence="1">
    <location>
        <begin position="218"/>
        <end position="240"/>
    </location>
</feature>
<feature type="repeat" description="LRR 6" evidence="1">
    <location>
        <begin position="241"/>
        <end position="266"/>
    </location>
</feature>
<feature type="repeat" description="LRR 7" evidence="1">
    <location>
        <begin position="268"/>
        <end position="288"/>
    </location>
</feature>
<feature type="repeat" description="LRR 8" evidence="1">
    <location>
        <begin position="289"/>
        <end position="316"/>
    </location>
</feature>
<feature type="repeat" description="LRR 9; degenerate" evidence="4">
    <location>
        <begin position="317"/>
        <end position="334"/>
    </location>
</feature>
<feature type="repeat" description="LRR 10" evidence="1">
    <location>
        <begin position="335"/>
        <end position="358"/>
    </location>
</feature>
<feature type="repeat" description="LRR 11" evidence="1">
    <location>
        <begin position="360"/>
        <end position="384"/>
    </location>
</feature>
<feature type="repeat" description="LRR 12" evidence="1">
    <location>
        <begin position="386"/>
        <end position="406"/>
    </location>
</feature>
<feature type="repeat" description="LRR 13" evidence="1">
    <location>
        <begin position="407"/>
        <end position="430"/>
    </location>
</feature>
<feature type="repeat" description="LRR 14" evidence="1">
    <location>
        <begin position="431"/>
        <end position="452"/>
    </location>
</feature>
<feature type="repeat" description="LRR 15" evidence="1">
    <location>
        <begin position="453"/>
        <end position="476"/>
    </location>
</feature>
<feature type="repeat" description="LRR 16" evidence="1">
    <location>
        <begin position="519"/>
        <end position="543"/>
    </location>
</feature>
<feature type="repeat" description="LRR 17" evidence="1">
    <location>
        <begin position="544"/>
        <end position="567"/>
    </location>
</feature>
<feature type="repeat" description="LRR 18" evidence="1">
    <location>
        <begin position="568"/>
        <end position="591"/>
    </location>
</feature>
<feature type="repeat" description="LRR 19" evidence="1">
    <location>
        <begin position="593"/>
        <end position="616"/>
    </location>
</feature>
<feature type="glycosylation site" description="N-linked (GlcNAc...) asparagine" evidence="2">
    <location>
        <position position="78"/>
    </location>
</feature>
<feature type="glycosylation site" description="N-linked (GlcNAc...) asparagine" evidence="2">
    <location>
        <position position="114"/>
    </location>
</feature>
<feature type="glycosylation site" description="N-linked (GlcNAc...) asparagine" evidence="2">
    <location>
        <position position="143"/>
    </location>
</feature>
<feature type="glycosylation site" description="N-linked (GlcNAc...) asparagine" evidence="2">
    <location>
        <position position="167"/>
    </location>
</feature>
<feature type="glycosylation site" description="N-linked (GlcNAc...) asparagine" evidence="2">
    <location>
        <position position="191"/>
    </location>
</feature>
<feature type="glycosylation site" description="N-linked (GlcNAc...) asparagine" evidence="2">
    <location>
        <position position="239"/>
    </location>
</feature>
<feature type="glycosylation site" description="N-linked (GlcNAc...) asparagine" evidence="2">
    <location>
        <position position="242"/>
    </location>
</feature>
<feature type="glycosylation site" description="N-linked (GlcNAc...) asparagine" evidence="2">
    <location>
        <position position="252"/>
    </location>
</feature>
<feature type="glycosylation site" description="N-linked (GlcNAc...) asparagine" evidence="2">
    <location>
        <position position="263"/>
    </location>
</feature>
<feature type="glycosylation site" description="N-linked (GlcNAc...) asparagine" evidence="2">
    <location>
        <position position="295"/>
    </location>
</feature>
<feature type="glycosylation site" description="N-linked (GlcNAc...) asparagine" evidence="2">
    <location>
        <position position="323"/>
    </location>
</feature>
<feature type="glycosylation site" description="N-linked (GlcNAc...) asparagine" evidence="2">
    <location>
        <position position="347"/>
    </location>
</feature>
<feature type="glycosylation site" description="N-linked (GlcNAc...) asparagine" evidence="2">
    <location>
        <position position="362"/>
    </location>
</feature>
<feature type="glycosylation site" description="N-linked (GlcNAc...) asparagine" evidence="2">
    <location>
        <position position="372"/>
    </location>
</feature>
<feature type="glycosylation site" description="N-linked (GlcNAc...) asparagine" evidence="2">
    <location>
        <position position="420"/>
    </location>
</feature>
<feature type="glycosylation site" description="N-linked (GlcNAc...) asparagine" evidence="2">
    <location>
        <position position="466"/>
    </location>
</feature>
<feature type="glycosylation site" description="N-linked (GlcNAc...) asparagine" evidence="2">
    <location>
        <position position="550"/>
    </location>
</feature>
<feature type="glycosylation site" description="N-linked (GlcNAc...) asparagine" evidence="2">
    <location>
        <position position="590"/>
    </location>
</feature>
<feature type="glycosylation site" description="N-linked (GlcNAc...) asparagine" evidence="2">
    <location>
        <position position="598"/>
    </location>
</feature>
<reference key="1">
    <citation type="journal article" date="2000" name="DNA Res.">
        <title>Structural analysis of Arabidopsis thaliana chromosome 3. II. Sequence features of the 4,251,695 bp regions covered by 90 P1, TAC and BAC clones.</title>
        <authorList>
            <person name="Kaneko T."/>
            <person name="Katoh T."/>
            <person name="Sato S."/>
            <person name="Nakamura Y."/>
            <person name="Asamizu E."/>
            <person name="Tabata S."/>
        </authorList>
    </citation>
    <scope>NUCLEOTIDE SEQUENCE [LARGE SCALE GENOMIC DNA]</scope>
    <source>
        <strain>cv. Columbia</strain>
    </source>
</reference>
<reference key="2">
    <citation type="journal article" date="2017" name="Plant J.">
        <title>Araport11: a complete reannotation of the Arabidopsis thaliana reference genome.</title>
        <authorList>
            <person name="Cheng C.Y."/>
            <person name="Krishnakumar V."/>
            <person name="Chan A.P."/>
            <person name="Thibaud-Nissen F."/>
            <person name="Schobel S."/>
            <person name="Town C.D."/>
        </authorList>
    </citation>
    <scope>GENOME REANNOTATION</scope>
    <source>
        <strain>cv. Columbia</strain>
    </source>
</reference>
<reference key="3">
    <citation type="journal article" date="2004" name="Genome Res.">
        <title>Whole genome sequence comparisons and 'full-length' cDNA sequences: a combined approach to evaluate and improve Arabidopsis genome annotation.</title>
        <authorList>
            <person name="Castelli V."/>
            <person name="Aury J.-M."/>
            <person name="Jaillon O."/>
            <person name="Wincker P."/>
            <person name="Clepet C."/>
            <person name="Menard M."/>
            <person name="Cruaud C."/>
            <person name="Quetier F."/>
            <person name="Scarpelli C."/>
            <person name="Schaechter V."/>
            <person name="Temple G."/>
            <person name="Caboche M."/>
            <person name="Weissenbach J."/>
            <person name="Salanoubat M."/>
        </authorList>
    </citation>
    <scope>NUCLEOTIDE SEQUENCE [LARGE SCALE MRNA] OF 192-711</scope>
    <source>
        <strain>cv. Columbia</strain>
    </source>
</reference>
<reference key="4">
    <citation type="journal article" date="2005" name="Plant Physiol.">
        <title>Phylogenomic analysis of the receptor-like proteins of rice and Arabidopsis.</title>
        <authorList>
            <person name="Fritz-Laylin L.K."/>
            <person name="Krishnamurthy N."/>
            <person name="Toer M."/>
            <person name="Sjoelander K.V."/>
            <person name="Jones J.D."/>
        </authorList>
    </citation>
    <scope>GENE FAMILY</scope>
</reference>
<reference key="5">
    <citation type="journal article" date="2008" name="Plant Physiol.">
        <title>A genome-wide functional investigation into the roles of receptor-like proteins in Arabidopsis.</title>
        <authorList>
            <person name="Wang G."/>
            <person name="Ellendorff U."/>
            <person name="Kemp B."/>
            <person name="Mansfield J.W."/>
            <person name="Forsyth A."/>
            <person name="Mitchell K."/>
            <person name="Bastas K."/>
            <person name="Liu C.-M."/>
            <person name="Woods-Toer A."/>
            <person name="Zipfel C."/>
            <person name="de Wit P.J.G.M."/>
            <person name="Jones J.D.G."/>
            <person name="Toer M."/>
            <person name="Thomma B.P.H.J."/>
        </authorList>
    </citation>
    <scope>GENE FAMILY</scope>
    <scope>NOMENCLATURE</scope>
    <source>
        <strain>cv. Columbia</strain>
    </source>
</reference>
<name>RLP43_ARATH</name>
<keyword id="KW-1003">Cell membrane</keyword>
<keyword id="KW-0325">Glycoprotein</keyword>
<keyword id="KW-0433">Leucine-rich repeat</keyword>
<keyword id="KW-0472">Membrane</keyword>
<keyword id="KW-0675">Receptor</keyword>
<keyword id="KW-1185">Reference proteome</keyword>
<keyword id="KW-0677">Repeat</keyword>
<keyword id="KW-0732">Signal</keyword>
<keyword id="KW-0812">Transmembrane</keyword>
<keyword id="KW-1133">Transmembrane helix</keyword>
<comment type="subcellular location">
    <subcellularLocation>
        <location evidence="4">Cell membrane</location>
        <topology evidence="4">Single-pass type I membrane protein</topology>
    </subcellularLocation>
</comment>
<comment type="similarity">
    <text evidence="4">Belongs to the RLP family.</text>
</comment>
<comment type="sequence caution" evidence="4">
    <conflict type="frameshift">
        <sequence resource="EMBL" id="BX822238"/>
    </conflict>
</comment>
<accession>Q9LJW7</accession>
<evidence type="ECO:0000255" key="1"/>
<evidence type="ECO:0000255" key="2">
    <source>
        <dbReference type="PROSITE-ProRule" id="PRU00498"/>
    </source>
</evidence>
<evidence type="ECO:0000303" key="3">
    <source>
    </source>
</evidence>
<evidence type="ECO:0000305" key="4"/>
<evidence type="ECO:0000312" key="5">
    <source>
        <dbReference type="Araport" id="AT3G28890"/>
    </source>
</evidence>
<evidence type="ECO:0000312" key="6">
    <source>
        <dbReference type="EMBL" id="BAB02132.1"/>
    </source>
</evidence>
<gene>
    <name evidence="3" type="primary">RLP43</name>
    <name evidence="5" type="ordered locus">At3g28890</name>
    <name evidence="6" type="ORF">MLD15.6</name>
</gene>
<protein>
    <recommendedName>
        <fullName evidence="3">Receptor-like protein 43</fullName>
        <shortName evidence="3">AtRLP43</shortName>
    </recommendedName>
</protein>
<organism>
    <name type="scientific">Arabidopsis thaliana</name>
    <name type="common">Mouse-ear cress</name>
    <dbReference type="NCBI Taxonomy" id="3702"/>
    <lineage>
        <taxon>Eukaryota</taxon>
        <taxon>Viridiplantae</taxon>
        <taxon>Streptophyta</taxon>
        <taxon>Embryophyta</taxon>
        <taxon>Tracheophyta</taxon>
        <taxon>Spermatophyta</taxon>
        <taxon>Magnoliopsida</taxon>
        <taxon>eudicotyledons</taxon>
        <taxon>Gunneridae</taxon>
        <taxon>Pentapetalae</taxon>
        <taxon>rosids</taxon>
        <taxon>malvids</taxon>
        <taxon>Brassicales</taxon>
        <taxon>Brassicaceae</taxon>
        <taxon>Camelineae</taxon>
        <taxon>Arabidopsis</taxon>
    </lineage>
</organism>
<sequence length="711" mass="79794">MKGFWNSKSTIRITLSFIFLFISQFSDVLAAPTRHLCRPEQKDALLKFKTEFEIGKPCRYCTVYCIEPHPKTESWGNNNSDCCNWEGVTCNAKSGEVIELDLSCSYLHGRFHSNSSIRNLHFLTTLDLSFNDFKGQIMSSIENLSHLTYLDLSFNHFSGQVPSSIGNLSHLTFLDLYCNQFSGQVPSSIGNLSHLTTLELSFNRFFGQFPSSIGGLSHLTTLNLFVNNFLGQIPSSIGNLSNLTSLYLCKNNFSGQIPSFIGNLSQLTRLDLSSNNFFGEIPGWLWTLPNLFYVNLSYNTFIGFQRPNKPEPSMGHLLGSNNNFTGKIPSFICELRSLETLDLSDNNFSGLIPRCMGNLKSNLSHLNLRQNNLSGGLPKHIFEILRSLDVGHNQLVGKLPRSLRFFSTLEVLNVESNRINDTFPFWLTSLPKLQVLVLRSNAFHGPIHEASFLKLRIIDISHNHFNGTLPSDYFVKWSAMSSLGTDEDRSNANYMGSVYYQDSMVLMNKGVESELIRILTIYTALDFSGNKFEGEIPKSIGLLKELLVLNLSNNAFTGHIPSSMGKLTALESLDVSQNKLYGEIPQEIGNLSFLSCMNFSHNQLAGLVPGGQQFLTQPCSSFEDNLGLFGSTLEEDCRDIHTPASHQQYKTPETEEEDEEVISWIAAAIGFIPGIVLGLTIGYILVFYKPEWFIKTFGRNNCRRRSTTTTH</sequence>